<reference key="1">
    <citation type="journal article" date="2006" name="PLoS Biol.">
        <title>The genome of deep-sea vent chemolithoautotroph Thiomicrospira crunogena XCL-2.</title>
        <authorList>
            <person name="Scott K.M."/>
            <person name="Sievert S.M."/>
            <person name="Abril F.N."/>
            <person name="Ball L.A."/>
            <person name="Barrett C.J."/>
            <person name="Blake R.A."/>
            <person name="Boller A.J."/>
            <person name="Chain P.S.G."/>
            <person name="Clark J.A."/>
            <person name="Davis C.R."/>
            <person name="Detter C."/>
            <person name="Do K.F."/>
            <person name="Dobrinski K.P."/>
            <person name="Faza B.I."/>
            <person name="Fitzpatrick K.A."/>
            <person name="Freyermuth S.K."/>
            <person name="Harmer T.L."/>
            <person name="Hauser L.J."/>
            <person name="Huegler M."/>
            <person name="Kerfeld C.A."/>
            <person name="Klotz M.G."/>
            <person name="Kong W.W."/>
            <person name="Land M."/>
            <person name="Lapidus A."/>
            <person name="Larimer F.W."/>
            <person name="Longo D.L."/>
            <person name="Lucas S."/>
            <person name="Malfatti S.A."/>
            <person name="Massey S.E."/>
            <person name="Martin D.D."/>
            <person name="McCuddin Z."/>
            <person name="Meyer F."/>
            <person name="Moore J.L."/>
            <person name="Ocampo L.H. Jr."/>
            <person name="Paul J.H."/>
            <person name="Paulsen I.T."/>
            <person name="Reep D.K."/>
            <person name="Ren Q."/>
            <person name="Ross R.L."/>
            <person name="Sato P.Y."/>
            <person name="Thomas P."/>
            <person name="Tinkham L.E."/>
            <person name="Zeruth G.T."/>
        </authorList>
    </citation>
    <scope>NUCLEOTIDE SEQUENCE [LARGE SCALE GENOMIC DNA]</scope>
    <source>
        <strain>DSM 25203 / XCL-2</strain>
    </source>
</reference>
<name>HEMH_HYDCU</name>
<accession>Q31EG9</accession>
<feature type="chain" id="PRO_1000059488" description="Ferrochelatase">
    <location>
        <begin position="1"/>
        <end position="378"/>
    </location>
</feature>
<feature type="binding site" evidence="1">
    <location>
        <position position="214"/>
    </location>
    <ligand>
        <name>Fe cation</name>
        <dbReference type="ChEBI" id="CHEBI:24875"/>
    </ligand>
</feature>
<feature type="binding site" evidence="1">
    <location>
        <position position="295"/>
    </location>
    <ligand>
        <name>Fe cation</name>
        <dbReference type="ChEBI" id="CHEBI:24875"/>
    </ligand>
</feature>
<comment type="function">
    <text evidence="1">Catalyzes the ferrous insertion into protoporphyrin IX.</text>
</comment>
<comment type="catalytic activity">
    <reaction evidence="1">
        <text>heme b + 2 H(+) = protoporphyrin IX + Fe(2+)</text>
        <dbReference type="Rhea" id="RHEA:22584"/>
        <dbReference type="ChEBI" id="CHEBI:15378"/>
        <dbReference type="ChEBI" id="CHEBI:29033"/>
        <dbReference type="ChEBI" id="CHEBI:57306"/>
        <dbReference type="ChEBI" id="CHEBI:60344"/>
        <dbReference type="EC" id="4.98.1.1"/>
    </reaction>
</comment>
<comment type="pathway">
    <text evidence="1">Porphyrin-containing compound metabolism; protoheme biosynthesis; protoheme from protoporphyrin-IX: step 1/1.</text>
</comment>
<comment type="subcellular location">
    <subcellularLocation>
        <location evidence="1">Cytoplasm</location>
    </subcellularLocation>
</comment>
<comment type="similarity">
    <text evidence="1">Belongs to the ferrochelatase family.</text>
</comment>
<evidence type="ECO:0000255" key="1">
    <source>
        <dbReference type="HAMAP-Rule" id="MF_00323"/>
    </source>
</evidence>
<proteinExistence type="inferred from homology"/>
<organism>
    <name type="scientific">Hydrogenovibrio crunogenus (strain DSM 25203 / XCL-2)</name>
    <name type="common">Thiomicrospira crunogena</name>
    <dbReference type="NCBI Taxonomy" id="317025"/>
    <lineage>
        <taxon>Bacteria</taxon>
        <taxon>Pseudomonadati</taxon>
        <taxon>Pseudomonadota</taxon>
        <taxon>Gammaproteobacteria</taxon>
        <taxon>Thiotrichales</taxon>
        <taxon>Piscirickettsiaceae</taxon>
        <taxon>Hydrogenovibrio</taxon>
    </lineage>
</organism>
<sequence length="378" mass="43101">MEYKNYTAYQHGSEPAVGVLITNLGTPDAPTKEALRPYLKEFLMDPRVVEPPPARWLWKLILNLIILNTRPAKSAEAYQEVWGKYGDGSPLLDISNRQLMDIEEKVRAHFSGRVEFALGMRYGNPSIASALKSLQDRNVQRLIVVPLYPQYAGATTASTFDAVSAELQQWRWIPELRFVRNYHKHPGYIKALANSIREHQAEHGKPDLLVMSYHGIPQRYFDNGDPYPCECRATSRLVAEELGLNSDEYMVTFQSLFGKEEWVKPYTDATLKSLPDKGVKHLQVICPGFSADCLETIEEIDQENREYFEEAGGEKFSYIPALNDRDDHTTALTQIILQQTRGWPERDGFDAEADKEERALQAKLADQLEKKLSDEFGQ</sequence>
<gene>
    <name evidence="1" type="primary">hemH</name>
    <name type="ordered locus">Tcr_1864</name>
</gene>
<dbReference type="EC" id="4.98.1.1" evidence="1"/>
<dbReference type="EMBL" id="CP000109">
    <property type="protein sequence ID" value="ABB42454.1"/>
    <property type="molecule type" value="Genomic_DNA"/>
</dbReference>
<dbReference type="SMR" id="Q31EG9"/>
<dbReference type="STRING" id="317025.Tcr_1864"/>
<dbReference type="KEGG" id="tcx:Tcr_1864"/>
<dbReference type="eggNOG" id="COG0276">
    <property type="taxonomic scope" value="Bacteria"/>
</dbReference>
<dbReference type="HOGENOM" id="CLU_018884_0_0_6"/>
<dbReference type="OrthoDB" id="9809741at2"/>
<dbReference type="UniPathway" id="UPA00252">
    <property type="reaction ID" value="UER00325"/>
</dbReference>
<dbReference type="GO" id="GO:0005737">
    <property type="term" value="C:cytoplasm"/>
    <property type="evidence" value="ECO:0007669"/>
    <property type="project" value="UniProtKB-SubCell"/>
</dbReference>
<dbReference type="GO" id="GO:0004325">
    <property type="term" value="F:ferrochelatase activity"/>
    <property type="evidence" value="ECO:0007669"/>
    <property type="project" value="UniProtKB-UniRule"/>
</dbReference>
<dbReference type="GO" id="GO:0046872">
    <property type="term" value="F:metal ion binding"/>
    <property type="evidence" value="ECO:0007669"/>
    <property type="project" value="UniProtKB-KW"/>
</dbReference>
<dbReference type="GO" id="GO:0006783">
    <property type="term" value="P:heme biosynthetic process"/>
    <property type="evidence" value="ECO:0007669"/>
    <property type="project" value="UniProtKB-UniRule"/>
</dbReference>
<dbReference type="CDD" id="cd00419">
    <property type="entry name" value="Ferrochelatase_C"/>
    <property type="match status" value="1"/>
</dbReference>
<dbReference type="CDD" id="cd03411">
    <property type="entry name" value="Ferrochelatase_N"/>
    <property type="match status" value="1"/>
</dbReference>
<dbReference type="FunFam" id="3.40.50.1400:FF:000002">
    <property type="entry name" value="Ferrochelatase"/>
    <property type="match status" value="1"/>
</dbReference>
<dbReference type="Gene3D" id="3.40.50.1400">
    <property type="match status" value="2"/>
</dbReference>
<dbReference type="HAMAP" id="MF_00323">
    <property type="entry name" value="Ferrochelatase"/>
    <property type="match status" value="1"/>
</dbReference>
<dbReference type="InterPro" id="IPR001015">
    <property type="entry name" value="Ferrochelatase"/>
</dbReference>
<dbReference type="InterPro" id="IPR019772">
    <property type="entry name" value="Ferrochelatase_AS"/>
</dbReference>
<dbReference type="InterPro" id="IPR033644">
    <property type="entry name" value="Ferrochelatase_C"/>
</dbReference>
<dbReference type="InterPro" id="IPR033659">
    <property type="entry name" value="Ferrochelatase_N"/>
</dbReference>
<dbReference type="NCBIfam" id="TIGR00109">
    <property type="entry name" value="hemH"/>
    <property type="match status" value="1"/>
</dbReference>
<dbReference type="PANTHER" id="PTHR11108">
    <property type="entry name" value="FERROCHELATASE"/>
    <property type="match status" value="1"/>
</dbReference>
<dbReference type="PANTHER" id="PTHR11108:SF1">
    <property type="entry name" value="FERROCHELATASE, MITOCHONDRIAL"/>
    <property type="match status" value="1"/>
</dbReference>
<dbReference type="Pfam" id="PF00762">
    <property type="entry name" value="Ferrochelatase"/>
    <property type="match status" value="1"/>
</dbReference>
<dbReference type="SUPFAM" id="SSF53800">
    <property type="entry name" value="Chelatase"/>
    <property type="match status" value="1"/>
</dbReference>
<dbReference type="PROSITE" id="PS00534">
    <property type="entry name" value="FERROCHELATASE"/>
    <property type="match status" value="1"/>
</dbReference>
<keyword id="KW-0963">Cytoplasm</keyword>
<keyword id="KW-0350">Heme biosynthesis</keyword>
<keyword id="KW-0408">Iron</keyword>
<keyword id="KW-0456">Lyase</keyword>
<keyword id="KW-0479">Metal-binding</keyword>
<keyword id="KW-0627">Porphyrin biosynthesis</keyword>
<protein>
    <recommendedName>
        <fullName evidence="1">Ferrochelatase</fullName>
        <ecNumber evidence="1">4.98.1.1</ecNumber>
    </recommendedName>
    <alternativeName>
        <fullName evidence="1">Heme synthase</fullName>
    </alternativeName>
    <alternativeName>
        <fullName evidence="1">Protoheme ferro-lyase</fullName>
    </alternativeName>
</protein>